<accession>A0A509AM61</accession>
<gene>
    <name evidence="4 5" type="primary">PIMMS43</name>
    <name evidence="7" type="ORF">PBANKA_1119200</name>
</gene>
<feature type="signal peptide" evidence="1">
    <location>
        <begin position="1"/>
        <end position="24"/>
    </location>
</feature>
<feature type="chain" id="PRO_5021215901" description="Ookinete surface protein PIMMS43" evidence="1">
    <location>
        <begin position="25"/>
        <end position="350"/>
    </location>
</feature>
<feature type="transmembrane region" description="Helical" evidence="1">
    <location>
        <begin position="330"/>
        <end position="350"/>
    </location>
</feature>
<proteinExistence type="evidence at protein level"/>
<protein>
    <recommendedName>
        <fullName evidence="6">Ookinete surface protein PIMMS43</fullName>
        <shortName evidence="4">PbPIMMS43</shortName>
    </recommendedName>
</protein>
<keyword id="KW-0472">Membrane</keyword>
<keyword id="KW-1185">Reference proteome</keyword>
<keyword id="KW-0732">Signal</keyword>
<keyword id="KW-0812">Transmembrane</keyword>
<keyword id="KW-1133">Transmembrane helix</keyword>
<sequence length="350" mass="40060">MIKLCTFLSLFLIFFFLNLNAINGSGNTGEVVQGTISVDSISKGMDSDESMLYEKNEYDNYQIPNICFDNTGIHQPRFIEDNKEYLYNKIGEISNSFSTNLNNYTTFMHELYGLYNDHIDVSMDNFRYGYIFMQVNFSKHKNKDSTAKLVVNLYGSVNKTHSAGIELAQGSFEVYLNQCDLAQNKINATITDSIFVMHDNTPAKEDHVTSTHDNTNLKNEDSLNKLNDLTKIHSSLMENNIDNTEHFITVDKISECIFQVNKLEDFLNNCMTLTNNNGPNSNENDDALKKHKSQMQKKIYRETLFSNFKESIVNKDMEGCKKNYTLLMSNSIASKLMSVFVFIAVIIYIL</sequence>
<evidence type="ECO:0000255" key="1"/>
<evidence type="ECO:0000269" key="2">
    <source>
    </source>
</evidence>
<evidence type="ECO:0000269" key="3">
    <source>
    </source>
</evidence>
<evidence type="ECO:0000303" key="4">
    <source>
    </source>
</evidence>
<evidence type="ECO:0000303" key="5">
    <source>
    </source>
</evidence>
<evidence type="ECO:0000305" key="6"/>
<evidence type="ECO:0000312" key="7">
    <source>
        <dbReference type="EMBL" id="VUC56613.1"/>
    </source>
</evidence>
<evidence type="ECO:0000312" key="8">
    <source>
        <dbReference type="Proteomes" id="UP000074855"/>
    </source>
</evidence>
<comment type="function">
    <text evidence="2 3">Involved in ookinete evasion of the mosquito complement-like response, oocyst maturation, sporozoite development and infectivity.</text>
</comment>
<comment type="subunit">
    <text evidence="2">Forms multimers, perhaps with an unknown protein(s).</text>
</comment>
<comment type="subcellular location">
    <subcellularLocation>
        <location evidence="2">Membrane</location>
        <topology evidence="1">Single-pass membrane protein</topology>
        <orientation evidence="2">Extracellular side</orientation>
    </subcellularLocation>
</comment>
<comment type="developmental stage">
    <text evidence="2">Expressed in ookinetes and sporozoites from mosquito salivary glands (at protein level) (PubMed:32165544). Transcription begins in gametocytes and peaks in zygotes and ookinetes (PubMed:32165544). Expression declines in oocysts but reappears in sporozoites from mosquito salivary glands (PubMed:32165544). Not detected in asexual blood stage parasites (PubMed:32165544).</text>
</comment>
<comment type="disruption phenotype">
    <text evidence="2 3">Formation of oocyst in Anopheles coluzzii mosquito midguts and development of salivary gland sporozoites are abolished (PubMed:32165544, PubMed:37708854). Transmission of parasites to mice following mosquito bite-back is abolished (PubMed:32165544). Parasites exhibit normal development in mouse blood stages and normal gametocyte-to-ookinete transition (PubMed:32165544).</text>
</comment>
<comment type="miscellaneous">
    <text evidence="2">Addition of antibodies against PIMMS43 to the infectious blood meal significantly reduces transmission of malaria parasites by A.coluzzii mosquitoes.</text>
</comment>
<name>PBC43_PLABA</name>
<organism evidence="8">
    <name type="scientific">Plasmodium berghei (strain Anka)</name>
    <dbReference type="NCBI Taxonomy" id="5823"/>
    <lineage>
        <taxon>Eukaryota</taxon>
        <taxon>Sar</taxon>
        <taxon>Alveolata</taxon>
        <taxon>Apicomplexa</taxon>
        <taxon>Aconoidasida</taxon>
        <taxon>Haemosporida</taxon>
        <taxon>Plasmodiidae</taxon>
        <taxon>Plasmodium</taxon>
        <taxon>Plasmodium (Vinckeia)</taxon>
    </lineage>
</organism>
<reference evidence="8" key="1">
    <citation type="journal article" date="2014" name="BMC Biol.">
        <title>A comprehensive evaluation of rodent malaria parasite genomes and gene expression.</title>
        <authorList>
            <person name="Otto T.D."/>
            <person name="Bohme U."/>
            <person name="Jackson A.P."/>
            <person name="Hunt M."/>
            <person name="Franke-Fayard B."/>
            <person name="Hoeijmakers W.A."/>
            <person name="Religa A.A."/>
            <person name="Robertson L."/>
            <person name="Sanders M."/>
            <person name="Ogun S.A."/>
            <person name="Cunningham D."/>
            <person name="Erhart A."/>
            <person name="Billker O."/>
            <person name="Khan S.M."/>
            <person name="Stunnenberg H.G."/>
            <person name="Langhorne J."/>
            <person name="Holder A.A."/>
            <person name="Waters A.P."/>
            <person name="Newbold C.I."/>
            <person name="Pain A."/>
            <person name="Berriman M."/>
            <person name="Janse C.J."/>
        </authorList>
    </citation>
    <scope>NUCLEOTIDE SEQUENCE [LARGE SCALE GENOMIC DNA]</scope>
    <source>
        <strain evidence="8">ANKA</strain>
    </source>
</reference>
<reference evidence="6" key="2">
    <citation type="journal article" date="2020" name="Proc. Natl. Acad. Sci. U.S.A.">
        <title>PIMMS43 is required for malaria parasite immune evasion and sporogonic development in the mosquito vector.</title>
        <authorList>
            <person name="Ukegbu C.V."/>
            <person name="Giorgalli M."/>
            <person name="Tapanelli S."/>
            <person name="Rona L.D.P."/>
            <person name="Jaye A."/>
            <person name="Wyer C."/>
            <person name="Angrisano F."/>
            <person name="Blagborough A.M."/>
            <person name="Christophides G.K."/>
            <person name="Vlachou D."/>
        </authorList>
    </citation>
    <scope>FUNCTION</scope>
    <scope>SUBUNIT</scope>
    <scope>SUBCELLULAR LOCATION</scope>
    <scope>DISRUPTION PHENOTYPE</scope>
</reference>
<reference key="3">
    <citation type="journal article" date="2023" name="Cell Host Microbe">
        <title>Identification of genes required for Plasmodium gametocyte-to-sporozoite development in the mosquito vector.</title>
        <authorList>
            <person name="Ukegbu C.V."/>
            <person name="Gomes A.R."/>
            <person name="Giorgalli M."/>
            <person name="Campos M."/>
            <person name="Bailey A.J."/>
            <person name="Besson T.R.B."/>
            <person name="Billker O."/>
            <person name="Vlachou D."/>
            <person name="Christophides G.K."/>
        </authorList>
    </citation>
    <scope>FUNCTION</scope>
    <scope>DISRUPTION PHENOTYPE</scope>
</reference>
<dbReference type="EMBL" id="LK023126">
    <property type="protein sequence ID" value="VUC56613.1"/>
    <property type="molecule type" value="Genomic_DNA"/>
</dbReference>
<dbReference type="SMR" id="A0A509AM61"/>
<dbReference type="FunCoup" id="A0A509AM61">
    <property type="interactions" value="471"/>
</dbReference>
<dbReference type="STRING" id="5823.A0A509AM61"/>
<dbReference type="VEuPathDB" id="PlasmoDB:PBANKA_1119200"/>
<dbReference type="InParanoid" id="A0A509AM61"/>
<dbReference type="OMA" id="NMARCKA"/>
<dbReference type="Proteomes" id="UP000074855">
    <property type="component" value="Chromosome 11"/>
</dbReference>
<dbReference type="GO" id="GO:0016020">
    <property type="term" value="C:membrane"/>
    <property type="evidence" value="ECO:0007669"/>
    <property type="project" value="UniProtKB-SubCell"/>
</dbReference>